<sequence length="468" mass="53988">MAESDLWSVDANSALELSLVEPTEDGLTTVTRFHPRFTYPLFGEEEQIFGYQDLKINLQYHAPDMRPNVKITHSKKFKSIGETQPTDLDALLQGYLPPVAFAKKREFEDAIRLMPADWTPPGEILSEFDGVDGAKFEIRRSNLADDASRQIIDRVQLLILLFIEGGSYIGTDTTDSLDRWDIFFLYNIKPSTTDGTSRYQFAGYSTVYKFFPLQRFPLEPKEAHENLELPSGEFPFSNLRSRTRISQFLILPPFQKSGNGSRLYRTIYDYCLRDPNVIEVTVEDPNEAFDDMRDVADLDFLRQKSEFTDLRINTDIHIPKQGAAPRGVVDEVKSEEARCLYRIAPRQFSRVLEMHLMSRLAETVRPTLVDDKVVAKPTKIETHEYDLWKLFVKQRLYRHNKEVLSQLDRHDRIERLNETLGSVELEYARILALAERRTQATSSNLKRKLDDDENTEGSSSKKARVEDA</sequence>
<dbReference type="EC" id="2.3.1.48" evidence="3"/>
<dbReference type="EMBL" id="CM001234">
    <property type="protein sequence ID" value="EHA50880.1"/>
    <property type="molecule type" value="Genomic_DNA"/>
</dbReference>
<dbReference type="RefSeq" id="XP_003717199.1">
    <property type="nucleotide sequence ID" value="XM_003717151.1"/>
</dbReference>
<dbReference type="SMR" id="G4N7S6"/>
<dbReference type="FunCoup" id="G4N7S6">
    <property type="interactions" value="1143"/>
</dbReference>
<dbReference type="STRING" id="242507.G4N7S6"/>
<dbReference type="iPTMnet" id="G4N7S6"/>
<dbReference type="EnsemblFungi" id="MGG_06375T0">
    <property type="protein sequence ID" value="MGG_06375T0"/>
    <property type="gene ID" value="MGG_06375"/>
</dbReference>
<dbReference type="GeneID" id="2684530"/>
<dbReference type="KEGG" id="mgr:MGG_06375"/>
<dbReference type="VEuPathDB" id="FungiDB:MGG_06375"/>
<dbReference type="eggNOG" id="KOG2696">
    <property type="taxonomic scope" value="Eukaryota"/>
</dbReference>
<dbReference type="HOGENOM" id="CLU_036024_2_1_1"/>
<dbReference type="InParanoid" id="G4N7S6"/>
<dbReference type="OMA" id="WTCDAND"/>
<dbReference type="OrthoDB" id="10253098at2759"/>
<dbReference type="PHI-base" id="PHI:11529"/>
<dbReference type="PRO" id="PR:G4N7S6"/>
<dbReference type="Proteomes" id="UP000009058">
    <property type="component" value="Chromosome 4"/>
</dbReference>
<dbReference type="GO" id="GO:0000781">
    <property type="term" value="C:chromosome, telomeric region"/>
    <property type="evidence" value="ECO:0007669"/>
    <property type="project" value="GOC"/>
</dbReference>
<dbReference type="GO" id="GO:0005634">
    <property type="term" value="C:nucleus"/>
    <property type="evidence" value="ECO:0007669"/>
    <property type="project" value="UniProtKB-SubCell"/>
</dbReference>
<dbReference type="GO" id="GO:0000407">
    <property type="term" value="C:phagophore assembly site"/>
    <property type="evidence" value="ECO:0007669"/>
    <property type="project" value="UniProtKB-SubCell"/>
</dbReference>
<dbReference type="GO" id="GO:0004402">
    <property type="term" value="F:histone acetyltransferase activity"/>
    <property type="evidence" value="ECO:0007669"/>
    <property type="project" value="UniProtKB-EC"/>
</dbReference>
<dbReference type="GO" id="GO:0006914">
    <property type="term" value="P:autophagy"/>
    <property type="evidence" value="ECO:0007669"/>
    <property type="project" value="UniProtKB-KW"/>
</dbReference>
<dbReference type="GO" id="GO:0006281">
    <property type="term" value="P:DNA repair"/>
    <property type="evidence" value="ECO:0007669"/>
    <property type="project" value="UniProtKB-KW"/>
</dbReference>
<dbReference type="GO" id="GO:0031509">
    <property type="term" value="P:subtelomeric heterochromatin formation"/>
    <property type="evidence" value="ECO:0007669"/>
    <property type="project" value="InterPro"/>
</dbReference>
<dbReference type="Gene3D" id="3.40.630.30">
    <property type="match status" value="1"/>
</dbReference>
<dbReference type="Gene3D" id="3.90.360.10">
    <property type="entry name" value="Histone acetyl transferase 1 (HAT1), N-terminal domain"/>
    <property type="match status" value="1"/>
</dbReference>
<dbReference type="InterPro" id="IPR016181">
    <property type="entry name" value="Acyl_CoA_acyltransferase"/>
</dbReference>
<dbReference type="InterPro" id="IPR019467">
    <property type="entry name" value="Hat1_N"/>
</dbReference>
<dbReference type="InterPro" id="IPR037113">
    <property type="entry name" value="Hat1_N_sf"/>
</dbReference>
<dbReference type="InterPro" id="IPR017380">
    <property type="entry name" value="Hist_AcTrfase_B-typ_cat-su"/>
</dbReference>
<dbReference type="PANTHER" id="PTHR12046">
    <property type="entry name" value="HISTONE ACETYLTRANSFERASE TYPE B CATALYTIC SUBUNIT"/>
    <property type="match status" value="1"/>
</dbReference>
<dbReference type="Pfam" id="PF10394">
    <property type="entry name" value="Hat1_N"/>
    <property type="match status" value="1"/>
</dbReference>
<dbReference type="PIRSF" id="PIRSF038084">
    <property type="entry name" value="HAT-B_cat"/>
    <property type="match status" value="1"/>
</dbReference>
<dbReference type="SUPFAM" id="SSF55729">
    <property type="entry name" value="Acyl-CoA N-acyltransferases (Nat)"/>
    <property type="match status" value="1"/>
</dbReference>
<keyword id="KW-0012">Acyltransferase</keyword>
<keyword id="KW-0072">Autophagy</keyword>
<keyword id="KW-0156">Chromatin regulator</keyword>
<keyword id="KW-0963">Cytoplasm</keyword>
<keyword id="KW-0227">DNA damage</keyword>
<keyword id="KW-0234">DNA repair</keyword>
<keyword id="KW-0309">Germination</keyword>
<keyword id="KW-0539">Nucleus</keyword>
<keyword id="KW-0597">Phosphoprotein</keyword>
<keyword id="KW-1185">Reference proteome</keyword>
<keyword id="KW-0346">Stress response</keyword>
<keyword id="KW-0808">Transferase</keyword>
<keyword id="KW-0843">Virulence</keyword>
<protein>
    <recommendedName>
        <fullName>Histone acetyltransferase type B catalytic subunit</fullName>
        <ecNumber evidence="3">2.3.1.48</ecNumber>
    </recommendedName>
</protein>
<gene>
    <name evidence="4" type="primary">HAT1</name>
    <name type="ORF">MGG_06375</name>
</gene>
<evidence type="ECO:0000250" key="1">
    <source>
        <dbReference type="UniProtKB" id="Q12341"/>
    </source>
</evidence>
<evidence type="ECO:0000256" key="2">
    <source>
        <dbReference type="SAM" id="MobiDB-lite"/>
    </source>
</evidence>
<evidence type="ECO:0000269" key="3">
    <source>
    </source>
</evidence>
<evidence type="ECO:0000303" key="4">
    <source>
    </source>
</evidence>
<evidence type="ECO:0000305" key="5"/>
<comment type="function">
    <text evidence="1 3">Catalytic component of the histone acetylase B (HAT-B) complex. Has intrinsic substrate specificity that modifies lysine in recognition sequence GXGKXG (By similarity). Involved in DNA double-strand break repair (PubMed:30776962). Required for appressorium turgor pressure, autophagy and conidial nuclear degradation (PubMed:30776962). During the germination process and upon starvation conditions, translocates from the nucleus to the cytoplasm where it acetylates ATG3 at 'lys-262' and 'Lys-267', thus influencing autophagy through controlling ATG3-ATG8 interaction (PubMed:30776962). Also acetylates ATG9 at 'Lys-621' to regulate ATG9 binding to vesicles, which is also important for autophagy and pathogenicity (PubMed:30776962).</text>
</comment>
<comment type="catalytic activity">
    <reaction evidence="3">
        <text>L-lysyl-[protein] + acetyl-CoA = N(6)-acetyl-L-lysyl-[protein] + CoA + H(+)</text>
        <dbReference type="Rhea" id="RHEA:45948"/>
        <dbReference type="Rhea" id="RHEA-COMP:9752"/>
        <dbReference type="Rhea" id="RHEA-COMP:10731"/>
        <dbReference type="ChEBI" id="CHEBI:15378"/>
        <dbReference type="ChEBI" id="CHEBI:29969"/>
        <dbReference type="ChEBI" id="CHEBI:57287"/>
        <dbReference type="ChEBI" id="CHEBI:57288"/>
        <dbReference type="ChEBI" id="CHEBI:61930"/>
        <dbReference type="EC" id="2.3.1.48"/>
    </reaction>
</comment>
<comment type="subunit">
    <text evidence="1 3">Component of the HAT-B complex composed of at least HAT1 and HAT2. The HAT-B complex binds to histone H4 tail (By similarity). In the nucleus, interacts with GSK1 and SSB1 (PubMed:30776962). In the cytoplasm, interacts with ATG3 and ATG9 (PubMed:30776962).</text>
</comment>
<comment type="subcellular location">
    <subcellularLocation>
        <location evidence="3">Nucleus</location>
    </subcellularLocation>
    <subcellularLocation>
        <location evidence="3">Cytoplasm</location>
    </subcellularLocation>
    <subcellularLocation>
        <location evidence="3">Preautophagosomal structure</location>
    </subcellularLocation>
    <text evidence="3">Is only present in the nucleus under nutrient-rich condition, and translocates from the nucleus to the cytoplasm with the assistance of SSB1 during germination or upon starvation.</text>
</comment>
<comment type="PTM">
    <text evidence="3">Phosphorylated at Ser-8 by GSK1 in the nucleus which impairs its translocation to the cytoplasm through interfering the interaction between HAT1 and SSB1. Dephosphorylation under nutrient starvation conditions promotes the interaction between HAT1 and SSB1 and results in the translocation of HAT1 from the nucleus to the cytoplasm in order to acetylate ATG3 and ATG9.</text>
</comment>
<comment type="disruption phenotype">
    <text evidence="3">Significantly attenuates virulence toward rice leaves by affecting appressorial penetration and infectious hyphal growth (PubMed:30776962). Impairs the acetylation of ATG3 during germination and weakens the interaction between ATG3 and ATG8 (PubMed:30776962). Also abolishes the acetylation of ATG9 and thus impairs the ATG9 binding ability to vesicles during nutrient starvation induction (PubMed:30776962).</text>
</comment>
<comment type="similarity">
    <text evidence="5">Belongs to the HAT1 family.</text>
</comment>
<reference key="1">
    <citation type="journal article" date="2005" name="Nature">
        <title>The genome sequence of the rice blast fungus Magnaporthe grisea.</title>
        <authorList>
            <person name="Dean R.A."/>
            <person name="Talbot N.J."/>
            <person name="Ebbole D.J."/>
            <person name="Farman M.L."/>
            <person name="Mitchell T.K."/>
            <person name="Orbach M.J."/>
            <person name="Thon M.R."/>
            <person name="Kulkarni R."/>
            <person name="Xu J.-R."/>
            <person name="Pan H."/>
            <person name="Read N.D."/>
            <person name="Lee Y.-H."/>
            <person name="Carbone I."/>
            <person name="Brown D."/>
            <person name="Oh Y.Y."/>
            <person name="Donofrio N."/>
            <person name="Jeong J.S."/>
            <person name="Soanes D.M."/>
            <person name="Djonovic S."/>
            <person name="Kolomiets E."/>
            <person name="Rehmeyer C."/>
            <person name="Li W."/>
            <person name="Harding M."/>
            <person name="Kim S."/>
            <person name="Lebrun M.-H."/>
            <person name="Bohnert H."/>
            <person name="Coughlan S."/>
            <person name="Butler J."/>
            <person name="Calvo S.E."/>
            <person name="Ma L.-J."/>
            <person name="Nicol R."/>
            <person name="Purcell S."/>
            <person name="Nusbaum C."/>
            <person name="Galagan J.E."/>
            <person name="Birren B.W."/>
        </authorList>
    </citation>
    <scope>NUCLEOTIDE SEQUENCE [LARGE SCALE GENOMIC DNA]</scope>
    <source>
        <strain>70-15 / ATCC MYA-4617 / FGSC 8958</strain>
    </source>
</reference>
<reference key="2">
    <citation type="journal article" date="2019" name="Autophagy">
        <title>Histone acetyltransferase MoHat1 acetylates autophagy-related proteins MoAtg3 and MoAtg9 to orchestrate functional appressorium formation and pathogenicity in Magnaporthe oryzae.</title>
        <authorList>
            <person name="Yin Z."/>
            <person name="Chen C."/>
            <person name="Yang J."/>
            <person name="Feng W."/>
            <person name="Liu X."/>
            <person name="Zuo R."/>
            <person name="Wang J."/>
            <person name="Yang L."/>
            <person name="Zhong K."/>
            <person name="Gao C."/>
            <person name="Zhang H."/>
            <person name="Zheng X."/>
            <person name="Wang P."/>
            <person name="Zhang Z."/>
        </authorList>
    </citation>
    <scope>FUNCTION</scope>
    <scope>DISRUPTION PHENOTYPE</scope>
    <scope>INTERACTION WITH ATG3; ATG9; GSK1 AND SSB1</scope>
    <scope>SUBCELLULAR LOCATION</scope>
    <scope>CATALYTIC ACTIVITY</scope>
    <scope>PHOSPHORYLATION AT SER-8</scope>
    <scope>MUTAGENESIS OF SER-8</scope>
</reference>
<accession>G4N7S6</accession>
<proteinExistence type="evidence at protein level"/>
<name>HAT1_PYRO7</name>
<feature type="chain" id="PRO_0000447267" description="Histone acetyltransferase type B catalytic subunit">
    <location>
        <begin position="1"/>
        <end position="468"/>
    </location>
</feature>
<feature type="region of interest" description="Interaction with histone H4 N-terminus" evidence="1">
    <location>
        <begin position="44"/>
        <end position="46"/>
    </location>
</feature>
<feature type="region of interest" description="Interaction with histone H4 N-terminus" evidence="1">
    <location>
        <begin position="208"/>
        <end position="210"/>
    </location>
</feature>
<feature type="region of interest" description="Disordered" evidence="2">
    <location>
        <begin position="442"/>
        <end position="468"/>
    </location>
</feature>
<feature type="active site" description="Proton donor/acceptor" evidence="1">
    <location>
        <position position="283"/>
    </location>
</feature>
<feature type="binding site" evidence="1">
    <location>
        <begin position="248"/>
        <end position="250"/>
    </location>
    <ligand>
        <name>acetyl-CoA</name>
        <dbReference type="ChEBI" id="CHEBI:57288"/>
    </ligand>
</feature>
<feature type="binding site" evidence="1">
    <location>
        <begin position="255"/>
        <end position="261"/>
    </location>
    <ligand>
        <name>acetyl-CoA</name>
        <dbReference type="ChEBI" id="CHEBI:57288"/>
    </ligand>
</feature>
<feature type="site" description="Interaction with histone H4 N-terminus" evidence="1">
    <location>
        <position position="180"/>
    </location>
</feature>
<feature type="modified residue" description="Phosphoserine" evidence="3">
    <location>
        <position position="8"/>
    </location>
</feature>
<feature type="mutagenesis site" description="Impairs phosphorylation of HAT1, and promotes the interaction with SSB1 and translocation from the nucleus to the cytoplasm." evidence="3">
    <original>S</original>
    <variation>A</variation>
    <location>
        <position position="8"/>
    </location>
</feature>
<feature type="mutagenesis site" description="Mimics constitutive phosphorylation and impairs phosphorylation of HAT1, interaction with SSB1 and translocation from the nucleus to the cytoplasm." evidence="3">
    <original>S</original>
    <variation>D</variation>
    <location>
        <position position="8"/>
    </location>
</feature>
<organism>
    <name type="scientific">Pyricularia oryzae (strain 70-15 / ATCC MYA-4617 / FGSC 8958)</name>
    <name type="common">Rice blast fungus</name>
    <name type="synonym">Magnaporthe oryzae</name>
    <dbReference type="NCBI Taxonomy" id="242507"/>
    <lineage>
        <taxon>Eukaryota</taxon>
        <taxon>Fungi</taxon>
        <taxon>Dikarya</taxon>
        <taxon>Ascomycota</taxon>
        <taxon>Pezizomycotina</taxon>
        <taxon>Sordariomycetes</taxon>
        <taxon>Sordariomycetidae</taxon>
        <taxon>Magnaporthales</taxon>
        <taxon>Pyriculariaceae</taxon>
        <taxon>Pyricularia</taxon>
    </lineage>
</organism>